<gene>
    <name evidence="2" type="primary">infB</name>
    <name type="ordered locus">Cmaq_0457</name>
</gene>
<sequence>MSENYRAPIVVVVGHVDVGKTLLLDKIRNTMVAYREPGMITQHIGLSYLPWPIIEKYAAPVIERYRLKGKVWVKGFLMVDTPGHAAFSNLRRRGGSVADLAILVIDLTRGFEEQTYESLILLKSRNIPFVVAANKVDRIYGWKPIPNASILDSYNAQDEETQGRLEEALANIIMDFNKQGFEAERFDRITDFSRQVPIVPTSAVTGEGIPDLLVLMAGLTQRLVKDRLRLVGGPGKGVVMEVKEEKGLGTTMDVVLYDGVMRKGDTIVAMGLNGPVVTRIRMMVMPKPLDEMRDPEDKYMHINEVEAAAGVKVIADGLDDVVPGSSVYVVQGDPKPYIDEVVKDAASVKIETDQIGVVAKADTLGTLEAMVLYLRSQGIPVRKADIGPVTRRDIIDASVVRRKNPLYGVVLAFNVKVPKEVEEEAKVQLVTIFQNNILYRLVEEFTKWFNEEKSRLIESELSKYVRPGKIAIIPGYVFRRSDPAIVGVEVLGGLIKPGYRLVKANGKEVGVIMQIQDKGKPIQVAKKGMSVAISIEGNVIVGRHIKEGDVLYVNVPLEHAVKLIMQYKDHLSSDEVEVLEEFMKLRSTWKAQAQ</sequence>
<reference key="1">
    <citation type="submission" date="2007-10" db="EMBL/GenBank/DDBJ databases">
        <title>Complete sequence of Caldivirga maquilingensis IC-167.</title>
        <authorList>
            <consortium name="US DOE Joint Genome Institute"/>
            <person name="Copeland A."/>
            <person name="Lucas S."/>
            <person name="Lapidus A."/>
            <person name="Barry K."/>
            <person name="Glavina del Rio T."/>
            <person name="Dalin E."/>
            <person name="Tice H."/>
            <person name="Pitluck S."/>
            <person name="Saunders E."/>
            <person name="Brettin T."/>
            <person name="Bruce D."/>
            <person name="Detter J.C."/>
            <person name="Han C."/>
            <person name="Schmutz J."/>
            <person name="Larimer F."/>
            <person name="Land M."/>
            <person name="Hauser L."/>
            <person name="Kyrpides N."/>
            <person name="Ivanova N."/>
            <person name="Biddle J.F."/>
            <person name="Zhang Z."/>
            <person name="Fitz-Gibbon S.T."/>
            <person name="Lowe T.M."/>
            <person name="Saltikov C."/>
            <person name="House C.H."/>
            <person name="Richardson P."/>
        </authorList>
    </citation>
    <scope>NUCLEOTIDE SEQUENCE [LARGE SCALE GENOMIC DNA]</scope>
    <source>
        <strain>ATCC 700844 / DSM 13496 / JCM 10307 / IC-167</strain>
    </source>
</reference>
<name>IF2P_CALMQ</name>
<keyword id="KW-0342">GTP-binding</keyword>
<keyword id="KW-0396">Initiation factor</keyword>
<keyword id="KW-0547">Nucleotide-binding</keyword>
<keyword id="KW-0648">Protein biosynthesis</keyword>
<keyword id="KW-1185">Reference proteome</keyword>
<comment type="function">
    <text evidence="2">Function in general translation initiation by promoting the binding of the formylmethionine-tRNA to ribosomes. Seems to function along with eIF-2.</text>
</comment>
<comment type="similarity">
    <text evidence="2">Belongs to the TRAFAC class translation factor GTPase superfamily. Classic translation factor GTPase family. IF-2 subfamily.</text>
</comment>
<accession>A8MBV9</accession>
<evidence type="ECO:0000250" key="1"/>
<evidence type="ECO:0000255" key="2">
    <source>
        <dbReference type="HAMAP-Rule" id="MF_00100"/>
    </source>
</evidence>
<organism>
    <name type="scientific">Caldivirga maquilingensis (strain ATCC 700844 / DSM 13496 / JCM 10307 / IC-167)</name>
    <dbReference type="NCBI Taxonomy" id="397948"/>
    <lineage>
        <taxon>Archaea</taxon>
        <taxon>Thermoproteota</taxon>
        <taxon>Thermoprotei</taxon>
        <taxon>Thermoproteales</taxon>
        <taxon>Thermoproteaceae</taxon>
        <taxon>Caldivirga</taxon>
    </lineage>
</organism>
<protein>
    <recommendedName>
        <fullName evidence="2">Probable translation initiation factor IF-2</fullName>
    </recommendedName>
</protein>
<dbReference type="EMBL" id="CP000852">
    <property type="protein sequence ID" value="ABW01302.1"/>
    <property type="molecule type" value="Genomic_DNA"/>
</dbReference>
<dbReference type="RefSeq" id="WP_012185522.1">
    <property type="nucleotide sequence ID" value="NC_009954.1"/>
</dbReference>
<dbReference type="SMR" id="A8MBV9"/>
<dbReference type="STRING" id="397948.Cmaq_0457"/>
<dbReference type="GeneID" id="5709932"/>
<dbReference type="KEGG" id="cma:Cmaq_0457"/>
<dbReference type="eggNOG" id="arCOG01560">
    <property type="taxonomic scope" value="Archaea"/>
</dbReference>
<dbReference type="HOGENOM" id="CLU_002656_3_3_2"/>
<dbReference type="OrthoDB" id="30957at2157"/>
<dbReference type="Proteomes" id="UP000001137">
    <property type="component" value="Chromosome"/>
</dbReference>
<dbReference type="GO" id="GO:0005737">
    <property type="term" value="C:cytoplasm"/>
    <property type="evidence" value="ECO:0007669"/>
    <property type="project" value="TreeGrafter"/>
</dbReference>
<dbReference type="GO" id="GO:0005525">
    <property type="term" value="F:GTP binding"/>
    <property type="evidence" value="ECO:0007669"/>
    <property type="project" value="UniProtKB-KW"/>
</dbReference>
<dbReference type="GO" id="GO:0003924">
    <property type="term" value="F:GTPase activity"/>
    <property type="evidence" value="ECO:0007669"/>
    <property type="project" value="UniProtKB-UniRule"/>
</dbReference>
<dbReference type="GO" id="GO:0003743">
    <property type="term" value="F:translation initiation factor activity"/>
    <property type="evidence" value="ECO:0007669"/>
    <property type="project" value="UniProtKB-UniRule"/>
</dbReference>
<dbReference type="CDD" id="cd03703">
    <property type="entry name" value="aeIF5B_II"/>
    <property type="match status" value="1"/>
</dbReference>
<dbReference type="CDD" id="cd16266">
    <property type="entry name" value="IF2_aeIF5B_IV"/>
    <property type="match status" value="1"/>
</dbReference>
<dbReference type="CDD" id="cd01887">
    <property type="entry name" value="IF2_eIF5B"/>
    <property type="match status" value="1"/>
</dbReference>
<dbReference type="FunFam" id="3.40.50.300:FF:000112">
    <property type="entry name" value="Eukaryotic translation initiation factor 5B"/>
    <property type="match status" value="1"/>
</dbReference>
<dbReference type="FunFam" id="2.40.30.10:FF:000013">
    <property type="entry name" value="eukaryotic translation initiation factor 5B"/>
    <property type="match status" value="1"/>
</dbReference>
<dbReference type="FunFam" id="3.40.50.10050:FF:000001">
    <property type="entry name" value="Translation initiation factor IF-2"/>
    <property type="match status" value="1"/>
</dbReference>
<dbReference type="Gene3D" id="3.40.50.300">
    <property type="entry name" value="P-loop containing nucleotide triphosphate hydrolases"/>
    <property type="match status" value="1"/>
</dbReference>
<dbReference type="Gene3D" id="2.40.30.10">
    <property type="entry name" value="Translation factors"/>
    <property type="match status" value="2"/>
</dbReference>
<dbReference type="Gene3D" id="3.40.50.10050">
    <property type="entry name" value="Translation initiation factor IF- 2, domain 3"/>
    <property type="match status" value="1"/>
</dbReference>
<dbReference type="HAMAP" id="MF_00100_A">
    <property type="entry name" value="IF_2_A"/>
    <property type="match status" value="1"/>
</dbReference>
<dbReference type="InterPro" id="IPR004161">
    <property type="entry name" value="EFTu-like_2"/>
</dbReference>
<dbReference type="InterPro" id="IPR029459">
    <property type="entry name" value="EFTU-type"/>
</dbReference>
<dbReference type="InterPro" id="IPR027417">
    <property type="entry name" value="P-loop_NTPase"/>
</dbReference>
<dbReference type="InterPro" id="IPR005225">
    <property type="entry name" value="Small_GTP-bd"/>
</dbReference>
<dbReference type="InterPro" id="IPR000795">
    <property type="entry name" value="T_Tr_GTP-bd_dom"/>
</dbReference>
<dbReference type="InterPro" id="IPR004544">
    <property type="entry name" value="TF_aIF-2_arc"/>
</dbReference>
<dbReference type="InterPro" id="IPR015760">
    <property type="entry name" value="TIF_IF2"/>
</dbReference>
<dbReference type="InterPro" id="IPR023115">
    <property type="entry name" value="TIF_IF2_dom3"/>
</dbReference>
<dbReference type="InterPro" id="IPR036925">
    <property type="entry name" value="TIF_IF2_dom3_sf"/>
</dbReference>
<dbReference type="InterPro" id="IPR009000">
    <property type="entry name" value="Transl_B-barrel_sf"/>
</dbReference>
<dbReference type="NCBIfam" id="TIGR00491">
    <property type="entry name" value="aIF-2"/>
    <property type="match status" value="1"/>
</dbReference>
<dbReference type="NCBIfam" id="NF003078">
    <property type="entry name" value="PRK04004.1"/>
    <property type="match status" value="1"/>
</dbReference>
<dbReference type="NCBIfam" id="TIGR00231">
    <property type="entry name" value="small_GTP"/>
    <property type="match status" value="1"/>
</dbReference>
<dbReference type="PANTHER" id="PTHR43381:SF4">
    <property type="entry name" value="EUKARYOTIC TRANSLATION INITIATION FACTOR 5B"/>
    <property type="match status" value="1"/>
</dbReference>
<dbReference type="PANTHER" id="PTHR43381">
    <property type="entry name" value="TRANSLATION INITIATION FACTOR IF-2-RELATED"/>
    <property type="match status" value="1"/>
</dbReference>
<dbReference type="Pfam" id="PF00009">
    <property type="entry name" value="GTP_EFTU"/>
    <property type="match status" value="1"/>
</dbReference>
<dbReference type="Pfam" id="PF03144">
    <property type="entry name" value="GTP_EFTU_D2"/>
    <property type="match status" value="1"/>
</dbReference>
<dbReference type="Pfam" id="PF14578">
    <property type="entry name" value="GTP_EFTU_D4"/>
    <property type="match status" value="1"/>
</dbReference>
<dbReference type="Pfam" id="PF11987">
    <property type="entry name" value="IF-2"/>
    <property type="match status" value="1"/>
</dbReference>
<dbReference type="PRINTS" id="PR00315">
    <property type="entry name" value="ELONGATNFCT"/>
</dbReference>
<dbReference type="SUPFAM" id="SSF52156">
    <property type="entry name" value="Initiation factor IF2/eIF5b, domain 3"/>
    <property type="match status" value="1"/>
</dbReference>
<dbReference type="SUPFAM" id="SSF52540">
    <property type="entry name" value="P-loop containing nucleoside triphosphate hydrolases"/>
    <property type="match status" value="1"/>
</dbReference>
<dbReference type="SUPFAM" id="SSF50447">
    <property type="entry name" value="Translation proteins"/>
    <property type="match status" value="1"/>
</dbReference>
<dbReference type="PROSITE" id="PS51722">
    <property type="entry name" value="G_TR_2"/>
    <property type="match status" value="1"/>
</dbReference>
<feature type="chain" id="PRO_0000335521" description="Probable translation initiation factor IF-2">
    <location>
        <begin position="1"/>
        <end position="594"/>
    </location>
</feature>
<feature type="domain" description="tr-type G">
    <location>
        <begin position="5"/>
        <end position="224"/>
    </location>
</feature>
<feature type="region of interest" description="G1" evidence="1">
    <location>
        <begin position="14"/>
        <end position="21"/>
    </location>
</feature>
<feature type="region of interest" description="G2" evidence="1">
    <location>
        <begin position="39"/>
        <end position="43"/>
    </location>
</feature>
<feature type="region of interest" description="G3" evidence="1">
    <location>
        <begin position="80"/>
        <end position="83"/>
    </location>
</feature>
<feature type="region of interest" description="G4" evidence="1">
    <location>
        <begin position="134"/>
        <end position="137"/>
    </location>
</feature>
<feature type="region of interest" description="G5" evidence="1">
    <location>
        <begin position="202"/>
        <end position="204"/>
    </location>
</feature>
<feature type="binding site" evidence="2">
    <location>
        <begin position="14"/>
        <end position="21"/>
    </location>
    <ligand>
        <name>GTP</name>
        <dbReference type="ChEBI" id="CHEBI:37565"/>
    </ligand>
</feature>
<feature type="binding site" evidence="2">
    <location>
        <begin position="80"/>
        <end position="84"/>
    </location>
    <ligand>
        <name>GTP</name>
        <dbReference type="ChEBI" id="CHEBI:37565"/>
    </ligand>
</feature>
<feature type="binding site" evidence="2">
    <location>
        <begin position="134"/>
        <end position="137"/>
    </location>
    <ligand>
        <name>GTP</name>
        <dbReference type="ChEBI" id="CHEBI:37565"/>
    </ligand>
</feature>
<proteinExistence type="inferred from homology"/>